<protein>
    <recommendedName>
        <fullName>Puromycin-sensitive aminopeptidase</fullName>
        <shortName>PSA</shortName>
        <ecNumber>3.4.11.14</ecNumber>
    </recommendedName>
    <alternativeName>
        <fullName>Cytosol alanyl aminopeptidase</fullName>
        <shortName>AAP-S</shortName>
    </alternativeName>
    <alternativeName>
        <fullName>Meiotic prophase aminopeptidase 1</fullName>
    </alternativeName>
</protein>
<name>PSA_ARATH</name>
<feature type="chain" id="PRO_0000424590" description="Puromycin-sensitive aminopeptidase">
    <location>
        <begin position="1"/>
        <end position="883"/>
    </location>
</feature>
<feature type="active site" description="Proton acceptor" evidence="2">
    <location>
        <position position="302"/>
    </location>
</feature>
<feature type="binding site" evidence="1">
    <location>
        <position position="125"/>
    </location>
    <ligand>
        <name>substrate</name>
    </ligand>
</feature>
<feature type="binding site" evidence="1">
    <location>
        <begin position="265"/>
        <end position="269"/>
    </location>
    <ligand>
        <name>substrate</name>
    </ligand>
</feature>
<feature type="binding site" evidence="2">
    <location>
        <position position="301"/>
    </location>
    <ligand>
        <name>Zn(2+)</name>
        <dbReference type="ChEBI" id="CHEBI:29105"/>
        <note>catalytic</note>
    </ligand>
</feature>
<feature type="binding site" evidence="2">
    <location>
        <position position="305"/>
    </location>
    <ligand>
        <name>Zn(2+)</name>
        <dbReference type="ChEBI" id="CHEBI:29105"/>
        <note>catalytic</note>
    </ligand>
</feature>
<feature type="binding site" evidence="2">
    <location>
        <position position="324"/>
    </location>
    <ligand>
        <name>Zn(2+)</name>
        <dbReference type="ChEBI" id="CHEBI:29105"/>
        <note>catalytic</note>
    </ligand>
</feature>
<feature type="site" description="Transition state stabilizer" evidence="1">
    <location>
        <position position="385"/>
    </location>
</feature>
<gene>
    <name type="primary">MPA1</name>
    <name type="ordered locus">At1g63770</name>
    <name type="ORF">F24D7.4</name>
    <name type="ORF">T12P18.21</name>
</gene>
<accession>Q8H0S9</accession>
<accession>F4I3R2</accession>
<accession>Q0WMR3</accession>
<accession>Q9CAE1</accession>
<accession>Q9CAJ3</accession>
<proteinExistence type="evidence at transcript level"/>
<dbReference type="EC" id="3.4.11.14"/>
<dbReference type="EMBL" id="AC010852">
    <property type="protein sequence ID" value="AAG52451.1"/>
    <property type="status" value="ALT_SEQ"/>
    <property type="molecule type" value="Genomic_DNA"/>
</dbReference>
<dbReference type="EMBL" id="AC011622">
    <property type="protein sequence ID" value="AAG52429.1"/>
    <property type="status" value="ALT_SEQ"/>
    <property type="molecule type" value="Genomic_DNA"/>
</dbReference>
<dbReference type="EMBL" id="CP002684">
    <property type="protein sequence ID" value="AEE34146.1"/>
    <property type="status" value="ALT_SEQ"/>
    <property type="molecule type" value="Genomic_DNA"/>
</dbReference>
<dbReference type="EMBL" id="CP002684">
    <property type="protein sequence ID" value="ANM60183.1"/>
    <property type="molecule type" value="Genomic_DNA"/>
</dbReference>
<dbReference type="EMBL" id="AY960336">
    <property type="protein sequence ID" value="AAX59049.1"/>
    <property type="molecule type" value="mRNA"/>
</dbReference>
<dbReference type="EMBL" id="BT002074">
    <property type="protein sequence ID" value="AAN72085.1"/>
    <property type="molecule type" value="mRNA"/>
</dbReference>
<dbReference type="EMBL" id="BT010361">
    <property type="protein sequence ID" value="AAQ56804.1"/>
    <property type="molecule type" value="mRNA"/>
</dbReference>
<dbReference type="EMBL" id="AK229751">
    <property type="protein sequence ID" value="BAF01587.1"/>
    <property type="molecule type" value="mRNA"/>
</dbReference>
<dbReference type="RefSeq" id="NP_001154442.1">
    <property type="nucleotide sequence ID" value="NM_001160970.1"/>
</dbReference>
<dbReference type="RefSeq" id="NP_001322486.1">
    <molecule id="Q8H0S9-1"/>
    <property type="nucleotide sequence ID" value="NM_001334126.1"/>
</dbReference>
<dbReference type="SMR" id="Q8H0S9"/>
<dbReference type="BioGRID" id="27902">
    <property type="interactions" value="16"/>
</dbReference>
<dbReference type="FunCoup" id="Q8H0S9">
    <property type="interactions" value="678"/>
</dbReference>
<dbReference type="IntAct" id="Q8H0S9">
    <property type="interactions" value="1"/>
</dbReference>
<dbReference type="STRING" id="3702.Q8H0S9"/>
<dbReference type="MEROPS" id="M01.005"/>
<dbReference type="GlyGen" id="Q8H0S9">
    <property type="glycosylation" value="1 site"/>
</dbReference>
<dbReference type="iPTMnet" id="Q8H0S9"/>
<dbReference type="PaxDb" id="3702-AT1G63770.5"/>
<dbReference type="ProMEX" id="Q8H0S9"/>
<dbReference type="EnsemblPlants" id="AT1G63770.7">
    <molecule id="Q8H0S9-1"/>
    <property type="protein sequence ID" value="AT1G63770.7"/>
    <property type="gene ID" value="AT1G63770"/>
</dbReference>
<dbReference type="GeneID" id="842681"/>
<dbReference type="Gramene" id="AT1G63770.7">
    <molecule id="Q8H0S9-1"/>
    <property type="protein sequence ID" value="AT1G63770.7"/>
    <property type="gene ID" value="AT1G63770"/>
</dbReference>
<dbReference type="KEGG" id="ath:AT1G63770"/>
<dbReference type="Araport" id="AT1G63770"/>
<dbReference type="TAIR" id="AT1G63770"/>
<dbReference type="eggNOG" id="KOG1046">
    <property type="taxonomic scope" value="Eukaryota"/>
</dbReference>
<dbReference type="HOGENOM" id="CLU_007993_2_0_1"/>
<dbReference type="InParanoid" id="Q8H0S9"/>
<dbReference type="CD-CODE" id="4299E36E">
    <property type="entry name" value="Nucleolus"/>
</dbReference>
<dbReference type="PRO" id="PR:Q8H0S9"/>
<dbReference type="Proteomes" id="UP000006548">
    <property type="component" value="Chromosome 1"/>
</dbReference>
<dbReference type="ExpressionAtlas" id="Q8H0S9">
    <property type="expression patterns" value="baseline and differential"/>
</dbReference>
<dbReference type="GO" id="GO:0016285">
    <property type="term" value="F:alanyl aminopeptidase activity"/>
    <property type="evidence" value="ECO:0007669"/>
    <property type="project" value="UniProtKB-EC"/>
</dbReference>
<dbReference type="GO" id="GO:0008237">
    <property type="term" value="F:metallopeptidase activity"/>
    <property type="evidence" value="ECO:0007669"/>
    <property type="project" value="UniProtKB-KW"/>
</dbReference>
<dbReference type="GO" id="GO:0008270">
    <property type="term" value="F:zinc ion binding"/>
    <property type="evidence" value="ECO:0007669"/>
    <property type="project" value="InterPro"/>
</dbReference>
<dbReference type="GO" id="GO:0006508">
    <property type="term" value="P:proteolysis"/>
    <property type="evidence" value="ECO:0007669"/>
    <property type="project" value="UniProtKB-KW"/>
</dbReference>
<dbReference type="CDD" id="cd09600">
    <property type="entry name" value="M1_APN"/>
    <property type="match status" value="1"/>
</dbReference>
<dbReference type="FunFam" id="1.10.390.10:FF:000002">
    <property type="entry name" value="Aminopeptidase N"/>
    <property type="match status" value="1"/>
</dbReference>
<dbReference type="FunFam" id="2.60.40.1730:FF:000005">
    <property type="entry name" value="Aminopeptidase N"/>
    <property type="match status" value="1"/>
</dbReference>
<dbReference type="FunFam" id="2.60.40.1840:FF:000001">
    <property type="entry name" value="Aminopeptidase N"/>
    <property type="match status" value="1"/>
</dbReference>
<dbReference type="FunFam" id="1.25.50.10:FF:000002">
    <property type="entry name" value="Puromycin-sensitive aminopeptidase"/>
    <property type="match status" value="1"/>
</dbReference>
<dbReference type="FunFam" id="3.30.2010.30:FF:000002">
    <property type="entry name" value="Putative aminopeptidase N"/>
    <property type="match status" value="1"/>
</dbReference>
<dbReference type="Gene3D" id="2.60.40.1840">
    <property type="match status" value="1"/>
</dbReference>
<dbReference type="Gene3D" id="3.30.2010.30">
    <property type="match status" value="1"/>
</dbReference>
<dbReference type="Gene3D" id="1.10.390.10">
    <property type="entry name" value="Neutral Protease Domain 2"/>
    <property type="match status" value="1"/>
</dbReference>
<dbReference type="Gene3D" id="1.25.50.10">
    <property type="entry name" value="Peptidase M1, alanyl aminopeptidase, C-terminal domain"/>
    <property type="match status" value="1"/>
</dbReference>
<dbReference type="Gene3D" id="2.60.40.1730">
    <property type="entry name" value="tricorn interacting facor f3 domain"/>
    <property type="match status" value="1"/>
</dbReference>
<dbReference type="InterPro" id="IPR045357">
    <property type="entry name" value="Aminopeptidase_N-like_N"/>
</dbReference>
<dbReference type="InterPro" id="IPR042097">
    <property type="entry name" value="Aminopeptidase_N-like_N_sf"/>
</dbReference>
<dbReference type="InterPro" id="IPR038438">
    <property type="entry name" value="PepN_Ig-like_sf"/>
</dbReference>
<dbReference type="InterPro" id="IPR001930">
    <property type="entry name" value="Peptidase_M1"/>
</dbReference>
<dbReference type="InterPro" id="IPR014782">
    <property type="entry name" value="Peptidase_M1_dom"/>
</dbReference>
<dbReference type="InterPro" id="IPR012779">
    <property type="entry name" value="Peptidase_M1_pepN"/>
</dbReference>
<dbReference type="InterPro" id="IPR024601">
    <property type="entry name" value="Peptidase_M1_pepN_C"/>
</dbReference>
<dbReference type="InterPro" id="IPR037144">
    <property type="entry name" value="Peptidase_M1_pepN_C_sf"/>
</dbReference>
<dbReference type="InterPro" id="IPR035414">
    <property type="entry name" value="Peptidase_M1_pepN_Ig-like"/>
</dbReference>
<dbReference type="InterPro" id="IPR027268">
    <property type="entry name" value="Peptidase_M4/M1_CTD_sf"/>
</dbReference>
<dbReference type="NCBIfam" id="TIGR02414">
    <property type="entry name" value="pepN_proteo"/>
    <property type="match status" value="1"/>
</dbReference>
<dbReference type="PANTHER" id="PTHR46322">
    <property type="entry name" value="PUROMYCIN-SENSITIVE AMINOPEPTIDASE"/>
    <property type="match status" value="1"/>
</dbReference>
<dbReference type="PANTHER" id="PTHR46322:SF1">
    <property type="entry name" value="PUROMYCIN-SENSITIVE AMINOPEPTIDASE"/>
    <property type="match status" value="1"/>
</dbReference>
<dbReference type="Pfam" id="PF11940">
    <property type="entry name" value="DUF3458"/>
    <property type="match status" value="1"/>
</dbReference>
<dbReference type="Pfam" id="PF17432">
    <property type="entry name" value="DUF3458_C"/>
    <property type="match status" value="1"/>
</dbReference>
<dbReference type="Pfam" id="PF01433">
    <property type="entry name" value="Peptidase_M1"/>
    <property type="match status" value="1"/>
</dbReference>
<dbReference type="Pfam" id="PF17900">
    <property type="entry name" value="Peptidase_M1_N"/>
    <property type="match status" value="1"/>
</dbReference>
<dbReference type="PRINTS" id="PR00756">
    <property type="entry name" value="ALADIPTASE"/>
</dbReference>
<dbReference type="SUPFAM" id="SSF63737">
    <property type="entry name" value="Leukotriene A4 hydrolase N-terminal domain"/>
    <property type="match status" value="1"/>
</dbReference>
<dbReference type="SUPFAM" id="SSF55486">
    <property type="entry name" value="Metalloproteases ('zincins'), catalytic domain"/>
    <property type="match status" value="1"/>
</dbReference>
<dbReference type="PROSITE" id="PS00142">
    <property type="entry name" value="ZINC_PROTEASE"/>
    <property type="match status" value="1"/>
</dbReference>
<sequence length="883" mass="99159">MDAPKEIFLKNYTKPDYYFETVDLSFSLGEEKTIVSSKIKVSPRVKGSSAALVLDGHDLKLLSVKVEGKLLKEGDYQLDSRHLTLPSLPAEESFVLEIDTEIYPHKNTSLEGLYKSSGNFCTQCEAEGFRKITFYQDRPDIMAKYTCRVEGDKTLYPVLLSNGNLISQGDIEGGRHYALWEDPFKKPCYLFALVAGQLVSRDDTFTTRSGRQVSLKIWTPAEDLPKTAHAMYSLKAAMKWDEDVFGLEYDLDLFNIVAVPDFNMGAMENKSLNIFNSKLVLASPETATDADYAAILGVIGHEYFHNWTGNRVTCRDWFQLSLKEGLTVFRDQEFSSDMGSRTVKRIADVSKLRIYQFPQDAGPMAHPVRPHSYIKMDNFYTVTVYEKGAEVVRMYKTLLGTQGFRKGIDLYFERHDEQAVTCEDFFAAMRDANNADFANFLQWYSQAGTPVVKVVSSYNADARTFSLKFSQEIPPTPGQPTKEPTFIPVVVGLLDSSGKDITLSSVHHDGTVQTISGSSTILRVTKKEEEFVFSDIPERPVPSLFRGFSAPVRVETDLSNDDLFFLLAHDSDEFNRWEAGQVLARKLMLNLVSDFQQNKPLALNPKFVQGLGSVLSDSSLDKEFIAKAITLPGEGEIMDMMAVADPDAVHAVRKFVRKQLASELKEELLKIVENNRSTEAYVFDHSNMARRALKNTALAYLASLEDPAYMELALNEYKMATNLTDQFAALAALSQNPGKTRDDILADFYNKWQDDYLVVNKWFLLQSTSDIPGNVENVKKLLDHPAFDLRNPNKVYSLIGGFCGSPVNFHAKDGSGYKFLGDIVVQLDKLNPQVASRMVSAFSRWKRYDETRQGLAKAQLEMIMSANGLSENVFEIASKSLAA</sequence>
<comment type="function">
    <text evidence="3 4">Aminopeptidase with broad substrate specificity for several peptides. Involved in proteolytic events essential for cell growth and viability. Plays an essential role during prophase I of meiosis. Required for correct meiotic reconbination in both male and female gametophytes.</text>
</comment>
<comment type="catalytic activity">
    <reaction>
        <text>Release of an N-terminal amino acid, preferentially alanine, from a wide range of peptides, amides and arylamides.</text>
        <dbReference type="EC" id="3.4.11.14"/>
    </reaction>
</comment>
<comment type="cofactor">
    <cofactor evidence="1">
        <name>Zn(2+)</name>
        <dbReference type="ChEBI" id="CHEBI:29105"/>
    </cofactor>
    <text evidence="1">Binds 1 zinc ion per subunit.</text>
</comment>
<comment type="activity regulation">
    <text evidence="3">Strongly inhibited by puromycin and DAMPAQ-22.</text>
</comment>
<comment type="alternative products">
    <event type="alternative splicing"/>
    <isoform>
        <id>Q8H0S9-1</id>
        <name>1</name>
        <sequence type="displayed"/>
    </isoform>
    <text>A number of isoforms are produced. According to EST sequences.</text>
</comment>
<comment type="developmental stage">
    <text evidence="3">Expressed in meiocytes during meiotic prophase I.</text>
</comment>
<comment type="disruption phenotype">
    <text evidence="3">Reduced fertility and shorter siliques bearing a lower number of seeds compared with wild-type plants. Cytogenetic characterization of meiosis in the mutant line reveals that both male and female meiosis are defective.</text>
</comment>
<comment type="similarity">
    <text evidence="5">Belongs to the peptidase M1 family.</text>
</comment>
<comment type="sequence caution" evidence="5">
    <conflict type="erroneous gene model prediction">
        <sequence resource="EMBL-CDS" id="AAG52429"/>
    </conflict>
</comment>
<comment type="sequence caution" evidence="5">
    <conflict type="erroneous gene model prediction">
        <sequence resource="EMBL-CDS" id="AAG52451"/>
    </conflict>
</comment>
<comment type="sequence caution" evidence="5">
    <conflict type="erroneous gene model prediction">
        <sequence resource="EMBL-CDS" id="AEE34146"/>
    </conflict>
</comment>
<keyword id="KW-0025">Alternative splicing</keyword>
<keyword id="KW-0031">Aminopeptidase</keyword>
<keyword id="KW-0378">Hydrolase</keyword>
<keyword id="KW-0479">Metal-binding</keyword>
<keyword id="KW-0482">Metalloprotease</keyword>
<keyword id="KW-0645">Protease</keyword>
<keyword id="KW-1185">Reference proteome</keyword>
<keyword id="KW-0862">Zinc</keyword>
<reference key="1">
    <citation type="journal article" date="2000" name="Nature">
        <title>Sequence and analysis of chromosome 1 of the plant Arabidopsis thaliana.</title>
        <authorList>
            <person name="Theologis A."/>
            <person name="Ecker J.R."/>
            <person name="Palm C.J."/>
            <person name="Federspiel N.A."/>
            <person name="Kaul S."/>
            <person name="White O."/>
            <person name="Alonso J."/>
            <person name="Altafi H."/>
            <person name="Araujo R."/>
            <person name="Bowman C.L."/>
            <person name="Brooks S.Y."/>
            <person name="Buehler E."/>
            <person name="Chan A."/>
            <person name="Chao Q."/>
            <person name="Chen H."/>
            <person name="Cheuk R.F."/>
            <person name="Chin C.W."/>
            <person name="Chung M.K."/>
            <person name="Conn L."/>
            <person name="Conway A.B."/>
            <person name="Conway A.R."/>
            <person name="Creasy T.H."/>
            <person name="Dewar K."/>
            <person name="Dunn P."/>
            <person name="Etgu P."/>
            <person name="Feldblyum T.V."/>
            <person name="Feng J.-D."/>
            <person name="Fong B."/>
            <person name="Fujii C.Y."/>
            <person name="Gill J.E."/>
            <person name="Goldsmith A.D."/>
            <person name="Haas B."/>
            <person name="Hansen N.F."/>
            <person name="Hughes B."/>
            <person name="Huizar L."/>
            <person name="Hunter J.L."/>
            <person name="Jenkins J."/>
            <person name="Johnson-Hopson C."/>
            <person name="Khan S."/>
            <person name="Khaykin E."/>
            <person name="Kim C.J."/>
            <person name="Koo H.L."/>
            <person name="Kremenetskaia I."/>
            <person name="Kurtz D.B."/>
            <person name="Kwan A."/>
            <person name="Lam B."/>
            <person name="Langin-Hooper S."/>
            <person name="Lee A."/>
            <person name="Lee J.M."/>
            <person name="Lenz C.A."/>
            <person name="Li J.H."/>
            <person name="Li Y.-P."/>
            <person name="Lin X."/>
            <person name="Liu S.X."/>
            <person name="Liu Z.A."/>
            <person name="Luros J.S."/>
            <person name="Maiti R."/>
            <person name="Marziali A."/>
            <person name="Militscher J."/>
            <person name="Miranda M."/>
            <person name="Nguyen M."/>
            <person name="Nierman W.C."/>
            <person name="Osborne B.I."/>
            <person name="Pai G."/>
            <person name="Peterson J."/>
            <person name="Pham P.K."/>
            <person name="Rizzo M."/>
            <person name="Rooney T."/>
            <person name="Rowley D."/>
            <person name="Sakano H."/>
            <person name="Salzberg S.L."/>
            <person name="Schwartz J.R."/>
            <person name="Shinn P."/>
            <person name="Southwick A.M."/>
            <person name="Sun H."/>
            <person name="Tallon L.J."/>
            <person name="Tambunga G."/>
            <person name="Toriumi M.J."/>
            <person name="Town C.D."/>
            <person name="Utterback T."/>
            <person name="Van Aken S."/>
            <person name="Vaysberg M."/>
            <person name="Vysotskaia V.S."/>
            <person name="Walker M."/>
            <person name="Wu D."/>
            <person name="Yu G."/>
            <person name="Fraser C.M."/>
            <person name="Venter J.C."/>
            <person name="Davis R.W."/>
        </authorList>
    </citation>
    <scope>NUCLEOTIDE SEQUENCE [LARGE SCALE GENOMIC DNA]</scope>
    <source>
        <strain>cv. Columbia</strain>
    </source>
</reference>
<reference key="2">
    <citation type="journal article" date="2017" name="Plant J.">
        <title>Araport11: a complete reannotation of the Arabidopsis thaliana reference genome.</title>
        <authorList>
            <person name="Cheng C.Y."/>
            <person name="Krishnakumar V."/>
            <person name="Chan A.P."/>
            <person name="Thibaud-Nissen F."/>
            <person name="Schobel S."/>
            <person name="Town C.D."/>
        </authorList>
    </citation>
    <scope>GENOME REANNOTATION</scope>
    <source>
        <strain>cv. Columbia</strain>
    </source>
</reference>
<reference key="3">
    <citation type="journal article" date="2003" name="Science">
        <title>Empirical analysis of transcriptional activity in the Arabidopsis genome.</title>
        <authorList>
            <person name="Yamada K."/>
            <person name="Lim J."/>
            <person name="Dale J.M."/>
            <person name="Chen H."/>
            <person name="Shinn P."/>
            <person name="Palm C.J."/>
            <person name="Southwick A.M."/>
            <person name="Wu H.C."/>
            <person name="Kim C.J."/>
            <person name="Nguyen M."/>
            <person name="Pham P.K."/>
            <person name="Cheuk R.F."/>
            <person name="Karlin-Newmann G."/>
            <person name="Liu S.X."/>
            <person name="Lam B."/>
            <person name="Sakano H."/>
            <person name="Wu T."/>
            <person name="Yu G."/>
            <person name="Miranda M."/>
            <person name="Quach H.L."/>
            <person name="Tripp M."/>
            <person name="Chang C.H."/>
            <person name="Lee J.M."/>
            <person name="Toriumi M.J."/>
            <person name="Chan M.M."/>
            <person name="Tang C.C."/>
            <person name="Onodera C.S."/>
            <person name="Deng J.M."/>
            <person name="Akiyama K."/>
            <person name="Ansari Y."/>
            <person name="Arakawa T."/>
            <person name="Banh J."/>
            <person name="Banno F."/>
            <person name="Bowser L."/>
            <person name="Brooks S.Y."/>
            <person name="Carninci P."/>
            <person name="Chao Q."/>
            <person name="Choy N."/>
            <person name="Enju A."/>
            <person name="Goldsmith A.D."/>
            <person name="Gurjal M."/>
            <person name="Hansen N.F."/>
            <person name="Hayashizaki Y."/>
            <person name="Johnson-Hopson C."/>
            <person name="Hsuan V.W."/>
            <person name="Iida K."/>
            <person name="Karnes M."/>
            <person name="Khan S."/>
            <person name="Koesema E."/>
            <person name="Ishida J."/>
            <person name="Jiang P.X."/>
            <person name="Jones T."/>
            <person name="Kawai J."/>
            <person name="Kamiya A."/>
            <person name="Meyers C."/>
            <person name="Nakajima M."/>
            <person name="Narusaka M."/>
            <person name="Seki M."/>
            <person name="Sakurai T."/>
            <person name="Satou M."/>
            <person name="Tamse R."/>
            <person name="Vaysberg M."/>
            <person name="Wallender E.K."/>
            <person name="Wong C."/>
            <person name="Yamamura Y."/>
            <person name="Yuan S."/>
            <person name="Shinozaki K."/>
            <person name="Davis R.W."/>
            <person name="Theologis A."/>
            <person name="Ecker J.R."/>
        </authorList>
    </citation>
    <scope>NUCLEOTIDE SEQUENCE [LARGE SCALE MRNA]</scope>
    <source>
        <strain>cv. Columbia</strain>
    </source>
</reference>
<reference key="4">
    <citation type="submission" date="2006-07" db="EMBL/GenBank/DDBJ databases">
        <title>Large-scale analysis of RIKEN Arabidopsis full-length (RAFL) cDNAs.</title>
        <authorList>
            <person name="Totoki Y."/>
            <person name="Seki M."/>
            <person name="Ishida J."/>
            <person name="Nakajima M."/>
            <person name="Enju A."/>
            <person name="Kamiya A."/>
            <person name="Narusaka M."/>
            <person name="Shin-i T."/>
            <person name="Nakagawa M."/>
            <person name="Sakamoto N."/>
            <person name="Oishi K."/>
            <person name="Kohara Y."/>
            <person name="Kobayashi M."/>
            <person name="Toyoda A."/>
            <person name="Sakaki Y."/>
            <person name="Sakurai T."/>
            <person name="Iida K."/>
            <person name="Akiyama K."/>
            <person name="Satou M."/>
            <person name="Toyoda T."/>
            <person name="Konagaya A."/>
            <person name="Carninci P."/>
            <person name="Kawai J."/>
            <person name="Hayashizaki Y."/>
            <person name="Shinozaki K."/>
        </authorList>
    </citation>
    <scope>NUCLEOTIDE SEQUENCE [LARGE SCALE MRNA] OF 46-180</scope>
    <source>
        <strain>cv. Columbia</strain>
    </source>
</reference>
<reference key="5">
    <citation type="journal article" date="2004" name="Plant Cell">
        <title>A puromycin-sensitive aminopeptidase is essential for meiosis in Arabidopsis thaliana.</title>
        <authorList>
            <person name="Sanchez-Moran E."/>
            <person name="Jones G.H."/>
            <person name="Franklin F.C."/>
            <person name="Santos J.L."/>
        </authorList>
    </citation>
    <scope>DISRUPTION PHENOTYPE</scope>
    <scope>FUNCTION</scope>
    <scope>ACTIVITY REGULATION</scope>
    <scope>DEVELOPMENTAL STAGE</scope>
</reference>
<reference key="6">
    <citation type="journal article" date="2007" name="Genetics">
        <title>An analysis of univalent segregation in meiotic mutants of Arabidopsis thaliana: a possible role for synaptonemal complex.</title>
        <authorList>
            <person name="Pradillo M."/>
            <person name="Lopez E."/>
            <person name="Romero C."/>
            <person name="Sanchez-Moran E."/>
            <person name="Cunado N."/>
            <person name="Santos J.L."/>
        </authorList>
    </citation>
    <scope>FUNCTION</scope>
</reference>
<organism>
    <name type="scientific">Arabidopsis thaliana</name>
    <name type="common">Mouse-ear cress</name>
    <dbReference type="NCBI Taxonomy" id="3702"/>
    <lineage>
        <taxon>Eukaryota</taxon>
        <taxon>Viridiplantae</taxon>
        <taxon>Streptophyta</taxon>
        <taxon>Embryophyta</taxon>
        <taxon>Tracheophyta</taxon>
        <taxon>Spermatophyta</taxon>
        <taxon>Magnoliopsida</taxon>
        <taxon>eudicotyledons</taxon>
        <taxon>Gunneridae</taxon>
        <taxon>Pentapetalae</taxon>
        <taxon>rosids</taxon>
        <taxon>malvids</taxon>
        <taxon>Brassicales</taxon>
        <taxon>Brassicaceae</taxon>
        <taxon>Camelineae</taxon>
        <taxon>Arabidopsis</taxon>
    </lineage>
</organism>
<evidence type="ECO:0000250" key="1"/>
<evidence type="ECO:0000255" key="2">
    <source>
        <dbReference type="PROSITE-ProRule" id="PRU10095"/>
    </source>
</evidence>
<evidence type="ECO:0000269" key="3">
    <source>
    </source>
</evidence>
<evidence type="ECO:0000269" key="4">
    <source>
    </source>
</evidence>
<evidence type="ECO:0000305" key="5"/>